<protein>
    <recommendedName>
        <fullName evidence="1">Proteasome subunit alpha</fullName>
    </recommendedName>
    <alternativeName>
        <fullName evidence="1">20S proteasome alpha subunit</fullName>
    </alternativeName>
    <alternativeName>
        <fullName evidence="1">Proteasome core protein PsmA</fullName>
    </alternativeName>
</protein>
<evidence type="ECO:0000255" key="1">
    <source>
        <dbReference type="HAMAP-Rule" id="MF_00289"/>
    </source>
</evidence>
<reference key="1">
    <citation type="submission" date="1997-02" db="EMBL/GenBank/DDBJ databases">
        <authorList>
            <person name="Yoshida T."/>
            <person name="Yohda M."/>
            <person name="Ohta T."/>
            <person name="Iida T."/>
            <person name="Maruyama T."/>
            <person name="Kagawa Y."/>
        </authorList>
    </citation>
    <scope>NUCLEOTIDE SEQUENCE [GENOMIC DNA]</scope>
</reference>
<comment type="function">
    <text evidence="1">Component of the proteasome core, a large protease complex with broad specificity involved in protein degradation.</text>
</comment>
<comment type="activity regulation">
    <text evidence="1">The formation of the proteasomal ATPase PAN-20S proteasome complex, via the docking of the C-termini of PAN into the intersubunit pockets in the alpha-rings, triggers opening of the gate for substrate entry. Interconversion between the open-gate and close-gate conformations leads to a dynamic regulation of the 20S proteasome proteolysis activity.</text>
</comment>
<comment type="subunit">
    <text evidence="1">The 20S proteasome core is composed of 14 alpha and 14 beta subunits that assemble into four stacked heptameric rings, resulting in a barrel-shaped structure. The two inner rings, each composed of seven catalytic beta subunits, are sandwiched by two outer rings, each composed of seven alpha subunits. The catalytic chamber with the active sites is on the inside of the barrel. Has a gated structure, the ends of the cylinder being occluded by the N-termini of the alpha-subunits. Is capped at one or both ends by the proteasome regulatory ATPase, PAN.</text>
</comment>
<comment type="subcellular location">
    <subcellularLocation>
        <location evidence="1">Cytoplasm</location>
    </subcellularLocation>
</comment>
<comment type="similarity">
    <text evidence="1">Belongs to the peptidase T1A family.</text>
</comment>
<name>PSA_THEK1</name>
<dbReference type="EMBL" id="AB001084">
    <property type="protein sequence ID" value="BAA22211.1"/>
    <property type="molecule type" value="Genomic_DNA"/>
</dbReference>
<dbReference type="PIR" id="T43887">
    <property type="entry name" value="T43887"/>
</dbReference>
<dbReference type="SMR" id="O24733"/>
<dbReference type="MEROPS" id="T01.970"/>
<dbReference type="GO" id="GO:0005737">
    <property type="term" value="C:cytoplasm"/>
    <property type="evidence" value="ECO:0007669"/>
    <property type="project" value="UniProtKB-SubCell"/>
</dbReference>
<dbReference type="GO" id="GO:0019773">
    <property type="term" value="C:proteasome core complex, alpha-subunit complex"/>
    <property type="evidence" value="ECO:0000250"/>
    <property type="project" value="UniProtKB"/>
</dbReference>
<dbReference type="GO" id="GO:0004298">
    <property type="term" value="F:threonine-type endopeptidase activity"/>
    <property type="evidence" value="ECO:0007669"/>
    <property type="project" value="InterPro"/>
</dbReference>
<dbReference type="GO" id="GO:0010498">
    <property type="term" value="P:proteasomal protein catabolic process"/>
    <property type="evidence" value="ECO:0007669"/>
    <property type="project" value="UniProtKB-UniRule"/>
</dbReference>
<dbReference type="GO" id="GO:0006511">
    <property type="term" value="P:ubiquitin-dependent protein catabolic process"/>
    <property type="evidence" value="ECO:0007669"/>
    <property type="project" value="InterPro"/>
</dbReference>
<dbReference type="CDD" id="cd03756">
    <property type="entry name" value="proteasome_alpha_archeal"/>
    <property type="match status" value="1"/>
</dbReference>
<dbReference type="FunFam" id="3.60.20.10:FF:000004">
    <property type="entry name" value="Proteasome subunit alpha type-4"/>
    <property type="match status" value="1"/>
</dbReference>
<dbReference type="Gene3D" id="3.60.20.10">
    <property type="entry name" value="Glutamine Phosphoribosylpyrophosphate, subunit 1, domain 1"/>
    <property type="match status" value="1"/>
</dbReference>
<dbReference type="HAMAP" id="MF_00289_A">
    <property type="entry name" value="Proteasome_A_A"/>
    <property type="match status" value="1"/>
</dbReference>
<dbReference type="InterPro" id="IPR029055">
    <property type="entry name" value="Ntn_hydrolases_N"/>
</dbReference>
<dbReference type="InterPro" id="IPR050115">
    <property type="entry name" value="Proteasome_alpha"/>
</dbReference>
<dbReference type="InterPro" id="IPR023332">
    <property type="entry name" value="Proteasome_alpha-type"/>
</dbReference>
<dbReference type="InterPro" id="IPR019982">
    <property type="entry name" value="Proteasome_asu_arc"/>
</dbReference>
<dbReference type="InterPro" id="IPR000426">
    <property type="entry name" value="Proteasome_asu_N"/>
</dbReference>
<dbReference type="InterPro" id="IPR001353">
    <property type="entry name" value="Proteasome_sua/b"/>
</dbReference>
<dbReference type="NCBIfam" id="TIGR03633">
    <property type="entry name" value="arc_protsome_A"/>
    <property type="match status" value="1"/>
</dbReference>
<dbReference type="NCBIfam" id="NF003075">
    <property type="entry name" value="PRK03996.1"/>
    <property type="match status" value="1"/>
</dbReference>
<dbReference type="PANTHER" id="PTHR11599">
    <property type="entry name" value="PROTEASOME SUBUNIT ALPHA/BETA"/>
    <property type="match status" value="1"/>
</dbReference>
<dbReference type="Pfam" id="PF00227">
    <property type="entry name" value="Proteasome"/>
    <property type="match status" value="1"/>
</dbReference>
<dbReference type="Pfam" id="PF10584">
    <property type="entry name" value="Proteasome_A_N"/>
    <property type="match status" value="1"/>
</dbReference>
<dbReference type="SMART" id="SM00948">
    <property type="entry name" value="Proteasome_A_N"/>
    <property type="match status" value="1"/>
</dbReference>
<dbReference type="SUPFAM" id="SSF56235">
    <property type="entry name" value="N-terminal nucleophile aminohydrolases (Ntn hydrolases)"/>
    <property type="match status" value="1"/>
</dbReference>
<dbReference type="PROSITE" id="PS00388">
    <property type="entry name" value="PROTEASOME_ALPHA_1"/>
    <property type="match status" value="1"/>
</dbReference>
<dbReference type="PROSITE" id="PS51475">
    <property type="entry name" value="PROTEASOME_ALPHA_2"/>
    <property type="match status" value="1"/>
</dbReference>
<accession>O24733</accession>
<sequence>MAFVPPQAGYDRAITVFSPDGRLFQVNYAREAVKRGATAVGVKWKDGVVLAVEKRITSKLIEPSSYEKIFLIDDHIAAAPSGIIADARVLVDRARLEAQIYRLTYGEPVPLTVLVKKICDLKQAHTQYGGVRPFGAALLMAGVNEKPELFETDPSGAYFEWKAVAIGSGRNTAMAIFEEHYRDDIGKDDAIKLAILALAKTLEEPTAEGIEVAYITMDEKRWKKLPREELEKYLNEILQEVKEEEVEEKQEDYSELDQNY</sequence>
<proteinExistence type="inferred from homology"/>
<keyword id="KW-0963">Cytoplasm</keyword>
<keyword id="KW-0647">Proteasome</keyword>
<gene>
    <name evidence="1" type="primary">psmA</name>
</gene>
<feature type="chain" id="PRO_0000124190" description="Proteasome subunit alpha">
    <location>
        <begin position="1"/>
        <end position="260"/>
    </location>
</feature>
<organism>
    <name type="scientific">Thermococcus sp. (strain JCM 11816 / KS-1)</name>
    <dbReference type="NCBI Taxonomy" id="1295125"/>
    <lineage>
        <taxon>Archaea</taxon>
        <taxon>Methanobacteriati</taxon>
        <taxon>Methanobacteriota</taxon>
        <taxon>Thermococci</taxon>
        <taxon>Thermococcales</taxon>
        <taxon>Thermococcaceae</taxon>
        <taxon>Thermococcus</taxon>
    </lineage>
</organism>